<organism>
    <name type="scientific">Sulfolobus acidocaldarius (strain ATCC 33909 / DSM 639 / JCM 8929 / NBRC 15157 / NCIMB 11770)</name>
    <dbReference type="NCBI Taxonomy" id="330779"/>
    <lineage>
        <taxon>Archaea</taxon>
        <taxon>Thermoproteota</taxon>
        <taxon>Thermoprotei</taxon>
        <taxon>Sulfolobales</taxon>
        <taxon>Sulfolobaceae</taxon>
        <taxon>Sulfolobus</taxon>
    </lineage>
</organism>
<feature type="chain" id="PRO_0000151888" description="ATP phosphoribosyltransferase">
    <location>
        <begin position="1"/>
        <end position="285"/>
    </location>
</feature>
<evidence type="ECO:0000255" key="1">
    <source>
        <dbReference type="HAMAP-Rule" id="MF_00079"/>
    </source>
</evidence>
<proteinExistence type="inferred from homology"/>
<name>HIS1_SULAC</name>
<sequence>MKLAIPNKGRLQQPVLQFLNYVGIRPLSSDERALIIPTNWEGIQLVMLRTEDIPSLVEAGAADIGITGYDYVLESGANVDELIRLDFGKAKIVLAVPLSWDYNSPDQIKQEIRIATKYYNLAKKYITEKGIPAKVVKISGAAEVIPSLGAADAIIDVMSTGTTLKLHGLKPLDTVLETQAVVIGNRYWMKSDEADKINLMLTMMKGALYARNKKMIFMNVPDSKLNNVIQSLPAMLSPTLSKLAKGDAWEVITVIDGDKLPEIIAKVVANGARDIVVVDIEKVIK</sequence>
<reference key="1">
    <citation type="journal article" date="2005" name="J. Bacteriol.">
        <title>The genome of Sulfolobus acidocaldarius, a model organism of the Crenarchaeota.</title>
        <authorList>
            <person name="Chen L."/>
            <person name="Bruegger K."/>
            <person name="Skovgaard M."/>
            <person name="Redder P."/>
            <person name="She Q."/>
            <person name="Torarinsson E."/>
            <person name="Greve B."/>
            <person name="Awayez M."/>
            <person name="Zibat A."/>
            <person name="Klenk H.-P."/>
            <person name="Garrett R.A."/>
        </authorList>
    </citation>
    <scope>NUCLEOTIDE SEQUENCE [LARGE SCALE GENOMIC DNA]</scope>
    <source>
        <strain>ATCC 33909 / DSM 639 / JCM 8929 / NBRC 15157 / NCIMB 11770</strain>
    </source>
</reference>
<comment type="function">
    <text evidence="1">Catalyzes the condensation of ATP and 5-phosphoribose 1-diphosphate to form N'-(5'-phosphoribosyl)-ATP (PR-ATP). Has a crucial role in the pathway because the rate of histidine biosynthesis seems to be controlled primarily by regulation of HisG enzymatic activity.</text>
</comment>
<comment type="catalytic activity">
    <reaction evidence="1">
        <text>1-(5-phospho-beta-D-ribosyl)-ATP + diphosphate = 5-phospho-alpha-D-ribose 1-diphosphate + ATP</text>
        <dbReference type="Rhea" id="RHEA:18473"/>
        <dbReference type="ChEBI" id="CHEBI:30616"/>
        <dbReference type="ChEBI" id="CHEBI:33019"/>
        <dbReference type="ChEBI" id="CHEBI:58017"/>
        <dbReference type="ChEBI" id="CHEBI:73183"/>
        <dbReference type="EC" id="2.4.2.17"/>
    </reaction>
</comment>
<comment type="cofactor">
    <cofactor evidence="1">
        <name>Mg(2+)</name>
        <dbReference type="ChEBI" id="CHEBI:18420"/>
    </cofactor>
</comment>
<comment type="activity regulation">
    <text evidence="1">Feedback inhibited by histidine.</text>
</comment>
<comment type="pathway">
    <text evidence="1">Amino-acid biosynthesis; L-histidine biosynthesis; L-histidine from 5-phospho-alpha-D-ribose 1-diphosphate: step 1/9.</text>
</comment>
<comment type="subcellular location">
    <subcellularLocation>
        <location evidence="1">Cytoplasm</location>
    </subcellularLocation>
</comment>
<comment type="similarity">
    <text evidence="1">Belongs to the ATP phosphoribosyltransferase family. Long subfamily.</text>
</comment>
<gene>
    <name evidence="1" type="primary">hisG</name>
    <name type="ordered locus">Saci_1575</name>
</gene>
<dbReference type="EC" id="2.4.2.17" evidence="1"/>
<dbReference type="EMBL" id="CP000077">
    <property type="protein sequence ID" value="AAY80888.1"/>
    <property type="molecule type" value="Genomic_DNA"/>
</dbReference>
<dbReference type="RefSeq" id="WP_011278390.1">
    <property type="nucleotide sequence ID" value="NC_007181.1"/>
</dbReference>
<dbReference type="SMR" id="Q4J8J2"/>
<dbReference type="STRING" id="330779.Saci_1575"/>
<dbReference type="GeneID" id="14552068"/>
<dbReference type="GeneID" id="78441918"/>
<dbReference type="KEGG" id="sai:Saci_1575"/>
<dbReference type="PATRIC" id="fig|330779.12.peg.1515"/>
<dbReference type="eggNOG" id="arCOG02208">
    <property type="taxonomic scope" value="Archaea"/>
</dbReference>
<dbReference type="HOGENOM" id="CLU_038115_1_1_2"/>
<dbReference type="UniPathway" id="UPA00031">
    <property type="reaction ID" value="UER00006"/>
</dbReference>
<dbReference type="Proteomes" id="UP000001018">
    <property type="component" value="Chromosome"/>
</dbReference>
<dbReference type="GO" id="GO:0005737">
    <property type="term" value="C:cytoplasm"/>
    <property type="evidence" value="ECO:0007669"/>
    <property type="project" value="UniProtKB-SubCell"/>
</dbReference>
<dbReference type="GO" id="GO:0005524">
    <property type="term" value="F:ATP binding"/>
    <property type="evidence" value="ECO:0007669"/>
    <property type="project" value="UniProtKB-KW"/>
</dbReference>
<dbReference type="GO" id="GO:0003879">
    <property type="term" value="F:ATP phosphoribosyltransferase activity"/>
    <property type="evidence" value="ECO:0007669"/>
    <property type="project" value="UniProtKB-UniRule"/>
</dbReference>
<dbReference type="GO" id="GO:0000287">
    <property type="term" value="F:magnesium ion binding"/>
    <property type="evidence" value="ECO:0007669"/>
    <property type="project" value="UniProtKB-UniRule"/>
</dbReference>
<dbReference type="GO" id="GO:0000105">
    <property type="term" value="P:L-histidine biosynthetic process"/>
    <property type="evidence" value="ECO:0007669"/>
    <property type="project" value="UniProtKB-UniRule"/>
</dbReference>
<dbReference type="CDD" id="cd13594">
    <property type="entry name" value="PBP2_HisGL4"/>
    <property type="match status" value="1"/>
</dbReference>
<dbReference type="FunFam" id="3.30.70.120:FF:000002">
    <property type="entry name" value="ATP phosphoribosyltransferase"/>
    <property type="match status" value="1"/>
</dbReference>
<dbReference type="Gene3D" id="3.30.70.120">
    <property type="match status" value="1"/>
</dbReference>
<dbReference type="Gene3D" id="3.40.190.10">
    <property type="entry name" value="Periplasmic binding protein-like II"/>
    <property type="match status" value="2"/>
</dbReference>
<dbReference type="HAMAP" id="MF_00079">
    <property type="entry name" value="HisG_Long"/>
    <property type="match status" value="1"/>
</dbReference>
<dbReference type="InterPro" id="IPR020621">
    <property type="entry name" value="ATP-PRT_HisG_long"/>
</dbReference>
<dbReference type="InterPro" id="IPR013820">
    <property type="entry name" value="ATP_PRibTrfase_cat"/>
</dbReference>
<dbReference type="InterPro" id="IPR018198">
    <property type="entry name" value="ATP_PRibTrfase_CS"/>
</dbReference>
<dbReference type="InterPro" id="IPR001348">
    <property type="entry name" value="ATP_PRibTrfase_HisG"/>
</dbReference>
<dbReference type="InterPro" id="IPR013115">
    <property type="entry name" value="HisG_C"/>
</dbReference>
<dbReference type="InterPro" id="IPR011322">
    <property type="entry name" value="N-reg_PII-like_a/b"/>
</dbReference>
<dbReference type="InterPro" id="IPR015867">
    <property type="entry name" value="N-reg_PII/ATP_PRibTrfase_C"/>
</dbReference>
<dbReference type="NCBIfam" id="TIGR00070">
    <property type="entry name" value="hisG"/>
    <property type="match status" value="1"/>
</dbReference>
<dbReference type="NCBIfam" id="TIGR03455">
    <property type="entry name" value="HisG_C-term"/>
    <property type="match status" value="1"/>
</dbReference>
<dbReference type="PANTHER" id="PTHR21403:SF10">
    <property type="entry name" value="ATP PHOSPHORIBOSYLTRANSFERASE"/>
    <property type="match status" value="1"/>
</dbReference>
<dbReference type="PANTHER" id="PTHR21403">
    <property type="entry name" value="ATP PHOSPHORIBOSYLTRANSFERASE ATP-PRTASE"/>
    <property type="match status" value="1"/>
</dbReference>
<dbReference type="Pfam" id="PF01634">
    <property type="entry name" value="HisG"/>
    <property type="match status" value="1"/>
</dbReference>
<dbReference type="Pfam" id="PF08029">
    <property type="entry name" value="HisG_C"/>
    <property type="match status" value="1"/>
</dbReference>
<dbReference type="SUPFAM" id="SSF54913">
    <property type="entry name" value="GlnB-like"/>
    <property type="match status" value="1"/>
</dbReference>
<dbReference type="SUPFAM" id="SSF53850">
    <property type="entry name" value="Periplasmic binding protein-like II"/>
    <property type="match status" value="1"/>
</dbReference>
<dbReference type="PROSITE" id="PS01316">
    <property type="entry name" value="ATP_P_PHORIBOSYLTR"/>
    <property type="match status" value="1"/>
</dbReference>
<accession>Q4J8J2</accession>
<protein>
    <recommendedName>
        <fullName evidence="1">ATP phosphoribosyltransferase</fullName>
        <shortName evidence="1">ATP-PRT</shortName>
        <shortName evidence="1">ATP-PRTase</shortName>
        <ecNumber evidence="1">2.4.2.17</ecNumber>
    </recommendedName>
</protein>
<keyword id="KW-0028">Amino-acid biosynthesis</keyword>
<keyword id="KW-0067">ATP-binding</keyword>
<keyword id="KW-0963">Cytoplasm</keyword>
<keyword id="KW-0328">Glycosyltransferase</keyword>
<keyword id="KW-0368">Histidine biosynthesis</keyword>
<keyword id="KW-0460">Magnesium</keyword>
<keyword id="KW-0479">Metal-binding</keyword>
<keyword id="KW-0547">Nucleotide-binding</keyword>
<keyword id="KW-1185">Reference proteome</keyword>
<keyword id="KW-0808">Transferase</keyword>